<sequence length="295" mass="31875">MNNIIDGKALANEILEDLKLEIQELKSQTNASPKLAIVLVGDNPASIIYVKNKIKNAHKIGIDTLLVNLSTTIHTNDLITKINELNHDNEISGMIVQLPLPNSIDKNKILSAVSPYKDVDGFHPLNVGYLHSGIIDVSEFSQSFIPCTALGCLAVIKKYEPNLSGKHVVVIGRSNIVGKPLSALLLKEDCSVTICHSKTHNLGSIALKADIVVAAIGSPLKLTAEYFNPESIVIDVGINRISGNKIIGDVDFEHVKSKVKYITPVPGGIGPMTIAFLLKNTVKAFKDSYSTVCHL</sequence>
<protein>
    <recommendedName>
        <fullName evidence="1">Bifunctional protein FolD</fullName>
    </recommendedName>
    <domain>
        <recommendedName>
            <fullName evidence="1">Methylenetetrahydrofolate dehydrogenase</fullName>
            <ecNumber evidence="1">1.5.1.5</ecNumber>
        </recommendedName>
    </domain>
    <domain>
        <recommendedName>
            <fullName evidence="1">Methenyltetrahydrofolate cyclohydrolase</fullName>
            <ecNumber evidence="1">3.5.4.9</ecNumber>
        </recommendedName>
    </domain>
</protein>
<reference key="1">
    <citation type="submission" date="2007-09" db="EMBL/GenBank/DDBJ databases">
        <title>Complete genome sequence of Rickettsia akari.</title>
        <authorList>
            <person name="Madan A."/>
            <person name="Fahey J."/>
            <person name="Helton E."/>
            <person name="Ketteman M."/>
            <person name="Madan A."/>
            <person name="Rodrigues S."/>
            <person name="Sanchez A."/>
            <person name="Whiting M."/>
            <person name="Dasch G."/>
            <person name="Eremeeva M."/>
        </authorList>
    </citation>
    <scope>NUCLEOTIDE SEQUENCE [LARGE SCALE GENOMIC DNA]</scope>
    <source>
        <strain>Hartford</strain>
    </source>
</reference>
<organism>
    <name type="scientific">Rickettsia akari (strain Hartford)</name>
    <dbReference type="NCBI Taxonomy" id="293614"/>
    <lineage>
        <taxon>Bacteria</taxon>
        <taxon>Pseudomonadati</taxon>
        <taxon>Pseudomonadota</taxon>
        <taxon>Alphaproteobacteria</taxon>
        <taxon>Rickettsiales</taxon>
        <taxon>Rickettsiaceae</taxon>
        <taxon>Rickettsieae</taxon>
        <taxon>Rickettsia</taxon>
        <taxon>spotted fever group</taxon>
    </lineage>
</organism>
<accession>A8GNK0</accession>
<proteinExistence type="inferred from homology"/>
<evidence type="ECO:0000255" key="1">
    <source>
        <dbReference type="HAMAP-Rule" id="MF_01576"/>
    </source>
</evidence>
<comment type="function">
    <text evidence="1">Catalyzes the oxidation of 5,10-methylenetetrahydrofolate to 5,10-methenyltetrahydrofolate and then the hydrolysis of 5,10-methenyltetrahydrofolate to 10-formyltetrahydrofolate.</text>
</comment>
<comment type="catalytic activity">
    <reaction evidence="1">
        <text>(6R)-5,10-methylene-5,6,7,8-tetrahydrofolate + NADP(+) = (6R)-5,10-methenyltetrahydrofolate + NADPH</text>
        <dbReference type="Rhea" id="RHEA:22812"/>
        <dbReference type="ChEBI" id="CHEBI:15636"/>
        <dbReference type="ChEBI" id="CHEBI:57455"/>
        <dbReference type="ChEBI" id="CHEBI:57783"/>
        <dbReference type="ChEBI" id="CHEBI:58349"/>
        <dbReference type="EC" id="1.5.1.5"/>
    </reaction>
</comment>
<comment type="catalytic activity">
    <reaction evidence="1">
        <text>(6R)-5,10-methenyltetrahydrofolate + H2O = (6R)-10-formyltetrahydrofolate + H(+)</text>
        <dbReference type="Rhea" id="RHEA:23700"/>
        <dbReference type="ChEBI" id="CHEBI:15377"/>
        <dbReference type="ChEBI" id="CHEBI:15378"/>
        <dbReference type="ChEBI" id="CHEBI:57455"/>
        <dbReference type="ChEBI" id="CHEBI:195366"/>
        <dbReference type="EC" id="3.5.4.9"/>
    </reaction>
</comment>
<comment type="pathway">
    <text evidence="1">One-carbon metabolism; tetrahydrofolate interconversion.</text>
</comment>
<comment type="subunit">
    <text evidence="1">Homodimer.</text>
</comment>
<comment type="similarity">
    <text evidence="1">Belongs to the tetrahydrofolate dehydrogenase/cyclohydrolase family.</text>
</comment>
<name>FOLD_RICAH</name>
<feature type="chain" id="PRO_1000069252" description="Bifunctional protein FolD">
    <location>
        <begin position="1"/>
        <end position="295"/>
    </location>
</feature>
<feature type="binding site" evidence="1">
    <location>
        <begin position="172"/>
        <end position="174"/>
    </location>
    <ligand>
        <name>NADP(+)</name>
        <dbReference type="ChEBI" id="CHEBI:58349"/>
    </ligand>
</feature>
<feature type="binding site" evidence="1">
    <location>
        <position position="197"/>
    </location>
    <ligand>
        <name>NADP(+)</name>
        <dbReference type="ChEBI" id="CHEBI:58349"/>
    </ligand>
</feature>
<feature type="binding site" evidence="1">
    <location>
        <position position="238"/>
    </location>
    <ligand>
        <name>NADP(+)</name>
        <dbReference type="ChEBI" id="CHEBI:58349"/>
    </ligand>
</feature>
<dbReference type="EC" id="1.5.1.5" evidence="1"/>
<dbReference type="EC" id="3.5.4.9" evidence="1"/>
<dbReference type="EMBL" id="CP000847">
    <property type="protein sequence ID" value="ABV74975.1"/>
    <property type="molecule type" value="Genomic_DNA"/>
</dbReference>
<dbReference type="RefSeq" id="WP_012149608.1">
    <property type="nucleotide sequence ID" value="NC_009881.1"/>
</dbReference>
<dbReference type="SMR" id="A8GNK0"/>
<dbReference type="STRING" id="293614.A1C_03455"/>
<dbReference type="KEGG" id="rak:A1C_03455"/>
<dbReference type="eggNOG" id="COG0190">
    <property type="taxonomic scope" value="Bacteria"/>
</dbReference>
<dbReference type="HOGENOM" id="CLU_034045_2_1_5"/>
<dbReference type="UniPathway" id="UPA00193"/>
<dbReference type="Proteomes" id="UP000006830">
    <property type="component" value="Chromosome"/>
</dbReference>
<dbReference type="GO" id="GO:0005829">
    <property type="term" value="C:cytosol"/>
    <property type="evidence" value="ECO:0007669"/>
    <property type="project" value="TreeGrafter"/>
</dbReference>
<dbReference type="GO" id="GO:0004477">
    <property type="term" value="F:methenyltetrahydrofolate cyclohydrolase activity"/>
    <property type="evidence" value="ECO:0007669"/>
    <property type="project" value="UniProtKB-UniRule"/>
</dbReference>
<dbReference type="GO" id="GO:0004488">
    <property type="term" value="F:methylenetetrahydrofolate dehydrogenase (NADP+) activity"/>
    <property type="evidence" value="ECO:0007669"/>
    <property type="project" value="UniProtKB-UniRule"/>
</dbReference>
<dbReference type="GO" id="GO:0000105">
    <property type="term" value="P:L-histidine biosynthetic process"/>
    <property type="evidence" value="ECO:0007669"/>
    <property type="project" value="UniProtKB-KW"/>
</dbReference>
<dbReference type="GO" id="GO:0009086">
    <property type="term" value="P:methionine biosynthetic process"/>
    <property type="evidence" value="ECO:0007669"/>
    <property type="project" value="UniProtKB-KW"/>
</dbReference>
<dbReference type="GO" id="GO:0006164">
    <property type="term" value="P:purine nucleotide biosynthetic process"/>
    <property type="evidence" value="ECO:0007669"/>
    <property type="project" value="UniProtKB-KW"/>
</dbReference>
<dbReference type="GO" id="GO:0035999">
    <property type="term" value="P:tetrahydrofolate interconversion"/>
    <property type="evidence" value="ECO:0007669"/>
    <property type="project" value="UniProtKB-UniRule"/>
</dbReference>
<dbReference type="CDD" id="cd01080">
    <property type="entry name" value="NAD_bind_m-THF_DH_Cyclohyd"/>
    <property type="match status" value="1"/>
</dbReference>
<dbReference type="FunFam" id="3.40.50.720:FF:000094">
    <property type="entry name" value="Bifunctional protein FolD"/>
    <property type="match status" value="1"/>
</dbReference>
<dbReference type="FunFam" id="3.40.50.10860:FF:000005">
    <property type="entry name" value="C-1-tetrahydrofolate synthase, cytoplasmic, putative"/>
    <property type="match status" value="1"/>
</dbReference>
<dbReference type="Gene3D" id="3.40.50.10860">
    <property type="entry name" value="Leucine Dehydrogenase, chain A, domain 1"/>
    <property type="match status" value="1"/>
</dbReference>
<dbReference type="Gene3D" id="3.40.50.720">
    <property type="entry name" value="NAD(P)-binding Rossmann-like Domain"/>
    <property type="match status" value="1"/>
</dbReference>
<dbReference type="HAMAP" id="MF_01576">
    <property type="entry name" value="THF_DHG_CYH"/>
    <property type="match status" value="1"/>
</dbReference>
<dbReference type="InterPro" id="IPR046346">
    <property type="entry name" value="Aminoacid_DH-like_N_sf"/>
</dbReference>
<dbReference type="InterPro" id="IPR036291">
    <property type="entry name" value="NAD(P)-bd_dom_sf"/>
</dbReference>
<dbReference type="InterPro" id="IPR000672">
    <property type="entry name" value="THF_DH/CycHdrlase"/>
</dbReference>
<dbReference type="InterPro" id="IPR020630">
    <property type="entry name" value="THF_DH/CycHdrlase_cat_dom"/>
</dbReference>
<dbReference type="InterPro" id="IPR020867">
    <property type="entry name" value="THF_DH/CycHdrlase_CS"/>
</dbReference>
<dbReference type="InterPro" id="IPR020631">
    <property type="entry name" value="THF_DH/CycHdrlase_NAD-bd_dom"/>
</dbReference>
<dbReference type="NCBIfam" id="NF010768">
    <property type="entry name" value="PRK14171.1"/>
    <property type="match status" value="1"/>
</dbReference>
<dbReference type="PANTHER" id="PTHR48099:SF5">
    <property type="entry name" value="C-1-TETRAHYDROFOLATE SYNTHASE, CYTOPLASMIC"/>
    <property type="match status" value="1"/>
</dbReference>
<dbReference type="PANTHER" id="PTHR48099">
    <property type="entry name" value="C-1-TETRAHYDROFOLATE SYNTHASE, CYTOPLASMIC-RELATED"/>
    <property type="match status" value="1"/>
</dbReference>
<dbReference type="Pfam" id="PF00763">
    <property type="entry name" value="THF_DHG_CYH"/>
    <property type="match status" value="1"/>
</dbReference>
<dbReference type="Pfam" id="PF02882">
    <property type="entry name" value="THF_DHG_CYH_C"/>
    <property type="match status" value="1"/>
</dbReference>
<dbReference type="PRINTS" id="PR00085">
    <property type="entry name" value="THFDHDRGNASE"/>
</dbReference>
<dbReference type="SUPFAM" id="SSF53223">
    <property type="entry name" value="Aminoacid dehydrogenase-like, N-terminal domain"/>
    <property type="match status" value="1"/>
</dbReference>
<dbReference type="SUPFAM" id="SSF51735">
    <property type="entry name" value="NAD(P)-binding Rossmann-fold domains"/>
    <property type="match status" value="1"/>
</dbReference>
<dbReference type="PROSITE" id="PS00766">
    <property type="entry name" value="THF_DHG_CYH_1"/>
    <property type="match status" value="1"/>
</dbReference>
<dbReference type="PROSITE" id="PS00767">
    <property type="entry name" value="THF_DHG_CYH_2"/>
    <property type="match status" value="1"/>
</dbReference>
<gene>
    <name evidence="1" type="primary">folD</name>
    <name type="ordered locus">A1C_03455</name>
</gene>
<keyword id="KW-0028">Amino-acid biosynthesis</keyword>
<keyword id="KW-0368">Histidine biosynthesis</keyword>
<keyword id="KW-0378">Hydrolase</keyword>
<keyword id="KW-0486">Methionine biosynthesis</keyword>
<keyword id="KW-0511">Multifunctional enzyme</keyword>
<keyword id="KW-0521">NADP</keyword>
<keyword id="KW-0554">One-carbon metabolism</keyword>
<keyword id="KW-0560">Oxidoreductase</keyword>
<keyword id="KW-0658">Purine biosynthesis</keyword>